<evidence type="ECO:0000255" key="1">
    <source>
        <dbReference type="HAMAP-Rule" id="MF_01577"/>
    </source>
</evidence>
<protein>
    <recommendedName>
        <fullName evidence="1">Putative multidrug resistance protein MdtD</fullName>
    </recommendedName>
</protein>
<organism>
    <name type="scientific">Yersinia pseudotuberculosis serotype I (strain IP32953)</name>
    <dbReference type="NCBI Taxonomy" id="273123"/>
    <lineage>
        <taxon>Bacteria</taxon>
        <taxon>Pseudomonadati</taxon>
        <taxon>Pseudomonadota</taxon>
        <taxon>Gammaproteobacteria</taxon>
        <taxon>Enterobacterales</taxon>
        <taxon>Yersiniaceae</taxon>
        <taxon>Yersinia</taxon>
    </lineage>
</organism>
<dbReference type="EMBL" id="BX936398">
    <property type="protein sequence ID" value="CAH22054.1"/>
    <property type="molecule type" value="Genomic_DNA"/>
</dbReference>
<dbReference type="RefSeq" id="WP_011192784.1">
    <property type="nucleotide sequence ID" value="NC_006155.1"/>
</dbReference>
<dbReference type="SMR" id="Q668C4"/>
<dbReference type="KEGG" id="ypo:BZ17_3815"/>
<dbReference type="KEGG" id="yps:YPTB2816"/>
<dbReference type="PATRIC" id="fig|273123.14.peg.4004"/>
<dbReference type="Proteomes" id="UP000001011">
    <property type="component" value="Chromosome"/>
</dbReference>
<dbReference type="GO" id="GO:0005886">
    <property type="term" value="C:plasma membrane"/>
    <property type="evidence" value="ECO:0007669"/>
    <property type="project" value="UniProtKB-SubCell"/>
</dbReference>
<dbReference type="GO" id="GO:0022857">
    <property type="term" value="F:transmembrane transporter activity"/>
    <property type="evidence" value="ECO:0007669"/>
    <property type="project" value="UniProtKB-UniRule"/>
</dbReference>
<dbReference type="CDD" id="cd17503">
    <property type="entry name" value="MFS_LmrB_MDR_like"/>
    <property type="match status" value="1"/>
</dbReference>
<dbReference type="FunFam" id="1.20.1250.20:FF:000021">
    <property type="entry name" value="Putative multidrug resistance protein MdtD"/>
    <property type="match status" value="1"/>
</dbReference>
<dbReference type="FunFam" id="1.20.1720.10:FF:000001">
    <property type="entry name" value="Putative multidrug resistance protein MdtD"/>
    <property type="match status" value="1"/>
</dbReference>
<dbReference type="Gene3D" id="1.20.1250.20">
    <property type="entry name" value="MFS general substrate transporter like domains"/>
    <property type="match status" value="1"/>
</dbReference>
<dbReference type="Gene3D" id="1.20.1720.10">
    <property type="entry name" value="Multidrug resistance protein D"/>
    <property type="match status" value="1"/>
</dbReference>
<dbReference type="HAMAP" id="MF_01577">
    <property type="entry name" value="MFS_MdtD"/>
    <property type="match status" value="1"/>
</dbReference>
<dbReference type="InterPro" id="IPR011701">
    <property type="entry name" value="MFS"/>
</dbReference>
<dbReference type="InterPro" id="IPR020846">
    <property type="entry name" value="MFS_dom"/>
</dbReference>
<dbReference type="InterPro" id="IPR036259">
    <property type="entry name" value="MFS_trans_sf"/>
</dbReference>
<dbReference type="InterPro" id="IPR023721">
    <property type="entry name" value="Multi-R_MdtD"/>
</dbReference>
<dbReference type="NCBIfam" id="NF007799">
    <property type="entry name" value="PRK10504.1"/>
    <property type="match status" value="1"/>
</dbReference>
<dbReference type="PANTHER" id="PTHR42718:SF46">
    <property type="entry name" value="BLR6921 PROTEIN"/>
    <property type="match status" value="1"/>
</dbReference>
<dbReference type="PANTHER" id="PTHR42718">
    <property type="entry name" value="MAJOR FACILITATOR SUPERFAMILY MULTIDRUG TRANSPORTER MFSC"/>
    <property type="match status" value="1"/>
</dbReference>
<dbReference type="Pfam" id="PF07690">
    <property type="entry name" value="MFS_1"/>
    <property type="match status" value="1"/>
</dbReference>
<dbReference type="PRINTS" id="PR01036">
    <property type="entry name" value="TCRTETB"/>
</dbReference>
<dbReference type="SUPFAM" id="SSF103473">
    <property type="entry name" value="MFS general substrate transporter"/>
    <property type="match status" value="1"/>
</dbReference>
<dbReference type="PROSITE" id="PS50850">
    <property type="entry name" value="MFS"/>
    <property type="match status" value="1"/>
</dbReference>
<reference key="1">
    <citation type="journal article" date="2004" name="Proc. Natl. Acad. Sci. U.S.A.">
        <title>Insights into the evolution of Yersinia pestis through whole-genome comparison with Yersinia pseudotuberculosis.</title>
        <authorList>
            <person name="Chain P.S.G."/>
            <person name="Carniel E."/>
            <person name="Larimer F.W."/>
            <person name="Lamerdin J."/>
            <person name="Stoutland P.O."/>
            <person name="Regala W.M."/>
            <person name="Georgescu A.M."/>
            <person name="Vergez L.M."/>
            <person name="Land M.L."/>
            <person name="Motin V.L."/>
            <person name="Brubaker R.R."/>
            <person name="Fowler J."/>
            <person name="Hinnebusch J."/>
            <person name="Marceau M."/>
            <person name="Medigue C."/>
            <person name="Simonet M."/>
            <person name="Chenal-Francisque V."/>
            <person name="Souza B."/>
            <person name="Dacheux D."/>
            <person name="Elliott J.M."/>
            <person name="Derbise A."/>
            <person name="Hauser L.J."/>
            <person name="Garcia E."/>
        </authorList>
    </citation>
    <scope>NUCLEOTIDE SEQUENCE [LARGE SCALE GENOMIC DNA]</scope>
    <source>
        <strain>IP32953</strain>
    </source>
</reference>
<comment type="subcellular location">
    <subcellularLocation>
        <location evidence="1">Cell inner membrane</location>
        <topology evidence="1">Multi-pass membrane protein</topology>
    </subcellularLocation>
</comment>
<comment type="similarity">
    <text evidence="1">Belongs to the major facilitator superfamily. TCR/Tet family.</text>
</comment>
<accession>Q668C4</accession>
<feature type="chain" id="PRO_0000268606" description="Putative multidrug resistance protein MdtD">
    <location>
        <begin position="1"/>
        <end position="465"/>
    </location>
</feature>
<feature type="transmembrane region" description="Helical" evidence="1">
    <location>
        <begin position="12"/>
        <end position="32"/>
    </location>
</feature>
<feature type="transmembrane region" description="Helical" evidence="1">
    <location>
        <begin position="49"/>
        <end position="69"/>
    </location>
</feature>
<feature type="transmembrane region" description="Helical" evidence="1">
    <location>
        <begin position="72"/>
        <end position="92"/>
    </location>
</feature>
<feature type="transmembrane region" description="Helical" evidence="1">
    <location>
        <begin position="138"/>
        <end position="158"/>
    </location>
</feature>
<feature type="transmembrane region" description="Helical" evidence="1">
    <location>
        <begin position="165"/>
        <end position="185"/>
    </location>
</feature>
<feature type="transmembrane region" description="Helical" evidence="1">
    <location>
        <begin position="195"/>
        <end position="215"/>
    </location>
</feature>
<feature type="transmembrane region" description="Helical" evidence="1">
    <location>
        <begin position="219"/>
        <end position="239"/>
    </location>
</feature>
<feature type="transmembrane region" description="Helical" evidence="1">
    <location>
        <begin position="267"/>
        <end position="287"/>
    </location>
</feature>
<feature type="transmembrane region" description="Helical" evidence="1">
    <location>
        <begin position="290"/>
        <end position="310"/>
    </location>
</feature>
<feature type="transmembrane region" description="Helical" evidence="1">
    <location>
        <begin position="329"/>
        <end position="351"/>
    </location>
</feature>
<feature type="transmembrane region" description="Helical" evidence="1">
    <location>
        <begin position="393"/>
        <end position="413"/>
    </location>
</feature>
<feature type="transmembrane region" description="Helical" evidence="1">
    <location>
        <begin position="430"/>
        <end position="450"/>
    </location>
</feature>
<proteinExistence type="inferred from homology"/>
<sequence>MVTQATSVRWQLWIVAFGFFMQTLDTTIVNTALPSIAASLGENPLRMQSVIVSYVLTVAVMLPASGWLADRIGVKWVFFSAIILFTFGSLMCAQSATLNELILSRVLQGVGDAMMVPVGRLTVMKIVPREQYMAAMAFVTLPGQIGPLVGPALGGFLVEFASWHWIFLINLPVGVIGALATLLLMPNHKMSTRRFDISGFIMLAIGMATLTLALDGHTGLGLSPLAIAGLILCGVIALGSYWWHALGNRFALFSLHLFKNKIYTLGLVGSMSARIGSGMLPFMTPIFLQIGLGFSPFHAGLMMIPMIIGSMGMKRIIVQVVNRFGYRRVLVNATLLLAVVSLSLPLVAIMGWTLLMPVVLFFQGMLNALRFSTMNTLTLKTLPDRLASSGNSLLSMAMQLSMSIGVSTAGILLGTFAHHQVATNTPATHSAFLYSYLCMAIIIALPALIFNRVPPDTGANRHLAR</sequence>
<name>MDTD_YERPS</name>
<keyword id="KW-0997">Cell inner membrane</keyword>
<keyword id="KW-1003">Cell membrane</keyword>
<keyword id="KW-0472">Membrane</keyword>
<keyword id="KW-0812">Transmembrane</keyword>
<keyword id="KW-1133">Transmembrane helix</keyword>
<keyword id="KW-0813">Transport</keyword>
<gene>
    <name evidence="1" type="primary">mdtD</name>
    <name type="ordered locus">YPTB2816</name>
</gene>